<accession>P0A440</accession>
<accession>P38480</accession>
<keyword id="KW-0378">Hydrolase</keyword>
<keyword id="KW-0554">One-carbon metabolism</keyword>
<keyword id="KW-0658">Purine biosynthesis</keyword>
<keyword id="KW-1185">Reference proteome</keyword>
<name>PURU_ECOL6</name>
<proteinExistence type="inferred from homology"/>
<reference key="1">
    <citation type="journal article" date="2002" name="Proc. Natl. Acad. Sci. U.S.A.">
        <title>Extensive mosaic structure revealed by the complete genome sequence of uropathogenic Escherichia coli.</title>
        <authorList>
            <person name="Welch R.A."/>
            <person name="Burland V."/>
            <person name="Plunkett G. III"/>
            <person name="Redford P."/>
            <person name="Roesch P."/>
            <person name="Rasko D."/>
            <person name="Buckles E.L."/>
            <person name="Liou S.-R."/>
            <person name="Boutin A."/>
            <person name="Hackett J."/>
            <person name="Stroud D."/>
            <person name="Mayhew G.F."/>
            <person name="Rose D.J."/>
            <person name="Zhou S."/>
            <person name="Schwartz D.C."/>
            <person name="Perna N.T."/>
            <person name="Mobley H.L.T."/>
            <person name="Donnenberg M.S."/>
            <person name="Blattner F.R."/>
        </authorList>
    </citation>
    <scope>NUCLEOTIDE SEQUENCE [LARGE SCALE GENOMIC DNA]</scope>
    <source>
        <strain>CFT073 / ATCC 700928 / UPEC</strain>
    </source>
</reference>
<gene>
    <name evidence="1" type="primary">purU</name>
    <name type="ordered locus">c1696</name>
</gene>
<protein>
    <recommendedName>
        <fullName evidence="1">Formyltetrahydrofolate deformylase</fullName>
        <ecNumber evidence="1">3.5.1.10</ecNumber>
    </recommendedName>
    <alternativeName>
        <fullName evidence="1">Formyl-FH(4) hydrolase</fullName>
    </alternativeName>
</protein>
<feature type="chain" id="PRO_0000074962" description="Formyltetrahydrofolate deformylase">
    <location>
        <begin position="1"/>
        <end position="280"/>
    </location>
</feature>
<feature type="domain" description="ACT" evidence="1">
    <location>
        <begin position="8"/>
        <end position="86"/>
    </location>
</feature>
<feature type="active site" evidence="1">
    <location>
        <position position="225"/>
    </location>
</feature>
<sequence length="280" mass="31921">MHSLQRKVLRTICPDQKGLIARITNICYKHELNIVQNNEFVDHRTGRFFMRTELEGIFNDSTLLADLDSALPEGSVRELNPAGRRRIVILVTKEAHCLGDLLMKANYGGLDVEIAAVIGNHDTLRSLVERFDIPFELVSHEGLSRNEHDQKMADAIDAYQPDYVVLAKYMRVLTPEFVARFPNKIINIHHSFLPAFIGARPYHQAYERGVKIIGATAHYVNDNLDEGPIIMQDVIHVDHTYTAEDMMRAGRDVEKNVLSRALYKVLAQRVFVYGNRTIIL</sequence>
<dbReference type="EC" id="3.5.1.10" evidence="1"/>
<dbReference type="EMBL" id="AE014075">
    <property type="protein sequence ID" value="AAN80163.1"/>
    <property type="molecule type" value="Genomic_DNA"/>
</dbReference>
<dbReference type="RefSeq" id="WP_000555849.1">
    <property type="nucleotide sequence ID" value="NZ_CP051263.1"/>
</dbReference>
<dbReference type="SMR" id="P0A440"/>
<dbReference type="STRING" id="199310.c1696"/>
<dbReference type="GeneID" id="75203345"/>
<dbReference type="KEGG" id="ecc:c1696"/>
<dbReference type="eggNOG" id="COG0788">
    <property type="taxonomic scope" value="Bacteria"/>
</dbReference>
<dbReference type="HOGENOM" id="CLU_038395_3_2_6"/>
<dbReference type="BioCyc" id="ECOL199310:C1696-MONOMER"/>
<dbReference type="UniPathway" id="UPA00074">
    <property type="reaction ID" value="UER00170"/>
</dbReference>
<dbReference type="Proteomes" id="UP000001410">
    <property type="component" value="Chromosome"/>
</dbReference>
<dbReference type="GO" id="GO:0008864">
    <property type="term" value="F:formyltetrahydrofolate deformylase activity"/>
    <property type="evidence" value="ECO:0007669"/>
    <property type="project" value="UniProtKB-UniRule"/>
</dbReference>
<dbReference type="GO" id="GO:0006189">
    <property type="term" value="P:'de novo' IMP biosynthetic process"/>
    <property type="evidence" value="ECO:0007669"/>
    <property type="project" value="UniProtKB-UniRule"/>
</dbReference>
<dbReference type="GO" id="GO:0006730">
    <property type="term" value="P:one-carbon metabolic process"/>
    <property type="evidence" value="ECO:0007669"/>
    <property type="project" value="UniProtKB-KW"/>
</dbReference>
<dbReference type="CDD" id="cd04875">
    <property type="entry name" value="ACT_F4HF-DF"/>
    <property type="match status" value="1"/>
</dbReference>
<dbReference type="CDD" id="cd08648">
    <property type="entry name" value="FMT_core_Formyl-FH4-Hydrolase_C"/>
    <property type="match status" value="1"/>
</dbReference>
<dbReference type="FunFam" id="3.30.70.260:FF:000021">
    <property type="entry name" value="Formyltetrahydrofolate deformylase"/>
    <property type="match status" value="1"/>
</dbReference>
<dbReference type="FunFam" id="3.40.50.170:FF:000001">
    <property type="entry name" value="Formyltetrahydrofolate deformylase"/>
    <property type="match status" value="1"/>
</dbReference>
<dbReference type="Gene3D" id="3.30.70.260">
    <property type="match status" value="1"/>
</dbReference>
<dbReference type="Gene3D" id="3.40.50.170">
    <property type="entry name" value="Formyl transferase, N-terminal domain"/>
    <property type="match status" value="1"/>
</dbReference>
<dbReference type="HAMAP" id="MF_01927">
    <property type="entry name" value="PurU"/>
    <property type="match status" value="1"/>
</dbReference>
<dbReference type="InterPro" id="IPR045865">
    <property type="entry name" value="ACT-like_dom_sf"/>
</dbReference>
<dbReference type="InterPro" id="IPR002912">
    <property type="entry name" value="ACT_dom"/>
</dbReference>
<dbReference type="InterPro" id="IPR041729">
    <property type="entry name" value="Formyl-FH4-Hydrolase_C"/>
</dbReference>
<dbReference type="InterPro" id="IPR002376">
    <property type="entry name" value="Formyl_transf_N"/>
</dbReference>
<dbReference type="InterPro" id="IPR036477">
    <property type="entry name" value="Formyl_transf_N_sf"/>
</dbReference>
<dbReference type="InterPro" id="IPR004810">
    <property type="entry name" value="PurU"/>
</dbReference>
<dbReference type="InterPro" id="IPR044074">
    <property type="entry name" value="PurU_ACT"/>
</dbReference>
<dbReference type="NCBIfam" id="NF004684">
    <property type="entry name" value="PRK06027.1"/>
    <property type="match status" value="1"/>
</dbReference>
<dbReference type="NCBIfam" id="TIGR00655">
    <property type="entry name" value="PurU"/>
    <property type="match status" value="1"/>
</dbReference>
<dbReference type="PANTHER" id="PTHR42706">
    <property type="entry name" value="FORMYLTETRAHYDROFOLATE DEFORMYLASE"/>
    <property type="match status" value="1"/>
</dbReference>
<dbReference type="PANTHER" id="PTHR42706:SF1">
    <property type="entry name" value="FORMYLTETRAHYDROFOLATE DEFORMYLASE 2, MITOCHONDRIAL"/>
    <property type="match status" value="1"/>
</dbReference>
<dbReference type="Pfam" id="PF01842">
    <property type="entry name" value="ACT"/>
    <property type="match status" value="1"/>
</dbReference>
<dbReference type="Pfam" id="PF00551">
    <property type="entry name" value="Formyl_trans_N"/>
    <property type="match status" value="1"/>
</dbReference>
<dbReference type="PIRSF" id="PIRSF036480">
    <property type="entry name" value="FormyFH4_hydr"/>
    <property type="match status" value="1"/>
</dbReference>
<dbReference type="PRINTS" id="PR01575">
    <property type="entry name" value="FFH4HYDRLASE"/>
</dbReference>
<dbReference type="SUPFAM" id="SSF55021">
    <property type="entry name" value="ACT-like"/>
    <property type="match status" value="1"/>
</dbReference>
<dbReference type="SUPFAM" id="SSF53328">
    <property type="entry name" value="Formyltransferase"/>
    <property type="match status" value="1"/>
</dbReference>
<dbReference type="PROSITE" id="PS51671">
    <property type="entry name" value="ACT"/>
    <property type="match status" value="1"/>
</dbReference>
<organism>
    <name type="scientific">Escherichia coli O6:H1 (strain CFT073 / ATCC 700928 / UPEC)</name>
    <dbReference type="NCBI Taxonomy" id="199310"/>
    <lineage>
        <taxon>Bacteria</taxon>
        <taxon>Pseudomonadati</taxon>
        <taxon>Pseudomonadota</taxon>
        <taxon>Gammaproteobacteria</taxon>
        <taxon>Enterobacterales</taxon>
        <taxon>Enterobacteriaceae</taxon>
        <taxon>Escherichia</taxon>
    </lineage>
</organism>
<evidence type="ECO:0000255" key="1">
    <source>
        <dbReference type="HAMAP-Rule" id="MF_01927"/>
    </source>
</evidence>
<comment type="function">
    <text evidence="1">Catalyzes the hydrolysis of 10-formyltetrahydrofolate (formyl-FH4) to formate and tetrahydrofolate (FH4).</text>
</comment>
<comment type="catalytic activity">
    <reaction evidence="1">
        <text>(6R)-10-formyltetrahydrofolate + H2O = (6S)-5,6,7,8-tetrahydrofolate + formate + H(+)</text>
        <dbReference type="Rhea" id="RHEA:19833"/>
        <dbReference type="ChEBI" id="CHEBI:15377"/>
        <dbReference type="ChEBI" id="CHEBI:15378"/>
        <dbReference type="ChEBI" id="CHEBI:15740"/>
        <dbReference type="ChEBI" id="CHEBI:57453"/>
        <dbReference type="ChEBI" id="CHEBI:195366"/>
        <dbReference type="EC" id="3.5.1.10"/>
    </reaction>
</comment>
<comment type="pathway">
    <text evidence="1">Purine metabolism; IMP biosynthesis via de novo pathway; formate from 10-formyl-5,6,7,8-tetrahydrofolate: step 1/1.</text>
</comment>
<comment type="similarity">
    <text evidence="1">Belongs to the PurU family.</text>
</comment>